<proteinExistence type="evidence at protein level"/>
<comment type="function">
    <text evidence="1">EF-1-beta and EF-1-delta stimulate the exchange of GDP bound to EF-1-alpha to GTP.</text>
</comment>
<comment type="subunit">
    <text evidence="1">EF-1 is composed of 4 subunits: alpha, beta (1B-alpha=beta'), delta (1B-beta), and gamma (1B-gamma).</text>
</comment>
<comment type="similarity">
    <text evidence="2">Belongs to the EF-1-beta/EF-1-delta family.</text>
</comment>
<accession>P84973</accession>
<sequence length="30" mass="3039">LGSAPITEEAIATPPSAETKLVPVGYGIKK</sequence>
<dbReference type="Proteomes" id="UP000694918">
    <property type="component" value="Unplaced"/>
</dbReference>
<dbReference type="GO" id="GO:0003746">
    <property type="term" value="F:translation elongation factor activity"/>
    <property type="evidence" value="ECO:0007669"/>
    <property type="project" value="UniProtKB-KW"/>
</dbReference>
<organism>
    <name type="scientific">Populus euphratica</name>
    <name type="common">Euphrates poplar</name>
    <dbReference type="NCBI Taxonomy" id="75702"/>
    <lineage>
        <taxon>Eukaryota</taxon>
        <taxon>Viridiplantae</taxon>
        <taxon>Streptophyta</taxon>
        <taxon>Embryophyta</taxon>
        <taxon>Tracheophyta</taxon>
        <taxon>Spermatophyta</taxon>
        <taxon>Magnoliopsida</taxon>
        <taxon>eudicotyledons</taxon>
        <taxon>Gunneridae</taxon>
        <taxon>Pentapetalae</taxon>
        <taxon>rosids</taxon>
        <taxon>fabids</taxon>
        <taxon>Malpighiales</taxon>
        <taxon>Salicaceae</taxon>
        <taxon>Saliceae</taxon>
        <taxon>Populus</taxon>
    </lineage>
</organism>
<reference evidence="5" key="1">
    <citation type="thesis" date="2006" institute="ICAT-FCUL" country="Portugal">
        <title>Molecular analysis of Populus euphratica Oliv. response to moderate heat stress.</title>
        <authorList>
            <person name="Ferreira S."/>
        </authorList>
    </citation>
    <scope>PROTEIN SEQUENCE</scope>
    <source>
        <tissue evidence="3">Leaf</tissue>
    </source>
</reference>
<feature type="chain" id="PRO_0000300512" description="Elongation factor 1-delta">
    <location>
        <begin position="1" status="less than"/>
        <end position="30" status="greater than"/>
    </location>
</feature>
<feature type="non-consecutive residues" evidence="4">
    <location>
        <begin position="20"/>
        <end position="21"/>
    </location>
</feature>
<feature type="non-terminal residue" evidence="4">
    <location>
        <position position="1"/>
    </location>
</feature>
<feature type="non-terminal residue" evidence="4">
    <location>
        <position position="30"/>
    </location>
</feature>
<evidence type="ECO:0000250" key="1">
    <source>
        <dbReference type="UniProtKB" id="P48006"/>
    </source>
</evidence>
<evidence type="ECO:0000255" key="2"/>
<evidence type="ECO:0000269" key="3">
    <source ref="1"/>
</evidence>
<evidence type="ECO:0000303" key="4">
    <source ref="1"/>
</evidence>
<evidence type="ECO:0000305" key="5"/>
<name>EF1D_POPEU</name>
<protein>
    <recommendedName>
        <fullName>Elongation factor 1-delta</fullName>
        <shortName>EF-1-delta</shortName>
    </recommendedName>
    <alternativeName>
        <fullName>Elongation factor 1B-beta</fullName>
    </alternativeName>
    <alternativeName>
        <fullName>eEF-1B beta</fullName>
    </alternativeName>
</protein>
<keyword id="KW-0903">Direct protein sequencing</keyword>
<keyword id="KW-0251">Elongation factor</keyword>
<keyword id="KW-0648">Protein biosynthesis</keyword>
<keyword id="KW-1185">Reference proteome</keyword>